<protein>
    <recommendedName>
        <fullName>Calreticulin</fullName>
    </recommendedName>
</protein>
<evidence type="ECO:0000250" key="1"/>
<evidence type="ECO:0000250" key="2">
    <source>
        <dbReference type="UniProtKB" id="P14211"/>
    </source>
</evidence>
<evidence type="ECO:0000255" key="3"/>
<evidence type="ECO:0000255" key="4">
    <source>
        <dbReference type="PROSITE-ProRule" id="PRU10138"/>
    </source>
</evidence>
<evidence type="ECO:0000256" key="5">
    <source>
        <dbReference type="SAM" id="MobiDB-lite"/>
    </source>
</evidence>
<evidence type="ECO:0000305" key="6"/>
<feature type="signal peptide" evidence="3">
    <location>
        <begin position="1"/>
        <end position="25"/>
    </location>
</feature>
<feature type="chain" id="PRO_0000004191" description="Calreticulin">
    <location>
        <begin position="26"/>
        <end position="420"/>
    </location>
</feature>
<feature type="repeat" description="1-1">
    <location>
        <begin position="197"/>
        <end position="208"/>
    </location>
</feature>
<feature type="repeat" description="1-2">
    <location>
        <begin position="216"/>
        <end position="227"/>
    </location>
</feature>
<feature type="repeat" description="1-3">
    <location>
        <begin position="233"/>
        <end position="244"/>
    </location>
</feature>
<feature type="repeat" description="1-4">
    <location>
        <begin position="251"/>
        <end position="262"/>
    </location>
</feature>
<feature type="repeat" description="2-1">
    <location>
        <begin position="266"/>
        <end position="276"/>
    </location>
</feature>
<feature type="repeat" description="2-2">
    <location>
        <begin position="280"/>
        <end position="290"/>
    </location>
</feature>
<feature type="repeat" description="2-3">
    <location>
        <begin position="294"/>
        <end position="304"/>
    </location>
</feature>
<feature type="region of interest" description="4 X approximate repeats">
    <location>
        <begin position="197"/>
        <end position="262"/>
    </location>
</feature>
<feature type="region of interest" description="Disordered" evidence="5">
    <location>
        <begin position="213"/>
        <end position="285"/>
    </location>
</feature>
<feature type="region of interest" description="3 X approximate repeats">
    <location>
        <begin position="266"/>
        <end position="304"/>
    </location>
</feature>
<feature type="region of interest" description="Disordered" evidence="5">
    <location>
        <begin position="355"/>
        <end position="420"/>
    </location>
</feature>
<feature type="short sequence motif" description="Prevents secretion from ER" evidence="4">
    <location>
        <begin position="417"/>
        <end position="420"/>
    </location>
</feature>
<feature type="compositionally biased region" description="Basic and acidic residues" evidence="5">
    <location>
        <begin position="213"/>
        <end position="258"/>
    </location>
</feature>
<feature type="compositionally biased region" description="Basic and acidic residues" evidence="5">
    <location>
        <begin position="355"/>
        <end position="381"/>
    </location>
</feature>
<feature type="compositionally biased region" description="Acidic residues" evidence="5">
    <location>
        <begin position="382"/>
        <end position="402"/>
    </location>
</feature>
<feature type="compositionally biased region" description="Basic and acidic residues" evidence="5">
    <location>
        <begin position="403"/>
        <end position="420"/>
    </location>
</feature>
<feature type="binding site" evidence="2">
    <location>
        <position position="115"/>
    </location>
    <ligand>
        <name>an alpha-D-glucoside</name>
        <dbReference type="ChEBI" id="CHEBI:22390"/>
    </ligand>
</feature>
<feature type="binding site" evidence="2">
    <location>
        <position position="117"/>
    </location>
    <ligand>
        <name>an alpha-D-glucoside</name>
        <dbReference type="ChEBI" id="CHEBI:22390"/>
    </ligand>
</feature>
<feature type="binding site" evidence="2">
    <location>
        <position position="134"/>
    </location>
    <ligand>
        <name>an alpha-D-glucoside</name>
        <dbReference type="ChEBI" id="CHEBI:22390"/>
    </ligand>
</feature>
<feature type="binding site" evidence="2">
    <location>
        <position position="141"/>
    </location>
    <ligand>
        <name>an alpha-D-glucoside</name>
        <dbReference type="ChEBI" id="CHEBI:22390"/>
    </ligand>
</feature>
<feature type="binding site" evidence="2">
    <location>
        <position position="324"/>
    </location>
    <ligand>
        <name>an alpha-D-glucoside</name>
        <dbReference type="ChEBI" id="CHEBI:22390"/>
    </ligand>
</feature>
<feature type="glycosylation site" description="N-linked (GlcNAc...) asparagine" evidence="3">
    <location>
        <position position="57"/>
    </location>
</feature>
<keyword id="KW-0106">Calcium</keyword>
<keyword id="KW-0143">Chaperone</keyword>
<keyword id="KW-0256">Endoplasmic reticulum</keyword>
<keyword id="KW-0325">Glycoprotein</keyword>
<keyword id="KW-0430">Lectin</keyword>
<keyword id="KW-0479">Metal-binding</keyword>
<keyword id="KW-1185">Reference proteome</keyword>
<keyword id="KW-0677">Repeat</keyword>
<keyword id="KW-0732">Signal</keyword>
<keyword id="KW-0862">Zinc</keyword>
<comment type="function">
    <text evidence="1">Molecular calcium-binding chaperone promoting folding, oligomeric assembly and quality control in the ER via the calreticulin/calnexin cycle. This lectin may interact transiently with almost all of the monoglucosylated glycoproteins that are synthesized in the ER (By similarity).</text>
</comment>
<comment type="subcellular location">
    <subcellularLocation>
        <location evidence="4">Endoplasmic reticulum lumen</location>
    </subcellularLocation>
</comment>
<comment type="domain">
    <text evidence="1">Can be divided into a N-terminal globular domain, a proline-rich P-domain forming an elongated arm-like structure and a C-terminal acidic domain. The P-domain binds one molecule of calcium with high affinity, whereas the acidic C-domain binds multiple calcium ions with low affinity (By similarity).</text>
</comment>
<comment type="domain">
    <text evidence="1">The interaction with glycans occurs through a binding site in the globular lectin domain.</text>
</comment>
<comment type="domain">
    <text evidence="1">The zinc binding sites are localized to the N-domain.</text>
</comment>
<comment type="similarity">
    <text evidence="6">Belongs to the calreticulin family.</text>
</comment>
<gene>
    <name type="primary">CRT</name>
</gene>
<sequence>MAIRKGSSYAVAALLALASVAAVAGEVFFQEKFEDGWESRWVKSEWKKDENMAGEWNHTSGKWNGDAEDKGIQTSEDYRFYAISAEYPEFSNKDKTLVLQFSVKHEQKLDCGGGYVKLLGGDVDQKTLGGDTSYSIISRPDISRYSTKKVHTILTKDGKNHLIKKDVPCQTDQLTHVYTFIIRPDATYSILIDNEEKHTGSIYEHWDILPPKKIKDPEAKKPEDWDDKEYIPDPEDKKPEGYDDIPKEIPDPDAKKPEDWDDEEDGEWTAPTIPNPEYKGPWKQKKIKNPNYQGKWKAPMIDNPDFKDDPYIYAFDSLKYIGIELWQVKSGTLFDNIIITDDPALAKTFAEETWGKHKEAEKAAFDEAEKKKEEEDAAKGGDDEDDDLEDEEDDEKADEDKADSDAEDGKDSDDEKHDEL</sequence>
<proteinExistence type="evidence at transcript level"/>
<organism>
    <name type="scientific">Zea mays</name>
    <name type="common">Maize</name>
    <dbReference type="NCBI Taxonomy" id="4577"/>
    <lineage>
        <taxon>Eukaryota</taxon>
        <taxon>Viridiplantae</taxon>
        <taxon>Streptophyta</taxon>
        <taxon>Embryophyta</taxon>
        <taxon>Tracheophyta</taxon>
        <taxon>Spermatophyta</taxon>
        <taxon>Magnoliopsida</taxon>
        <taxon>Liliopsida</taxon>
        <taxon>Poales</taxon>
        <taxon>Poaceae</taxon>
        <taxon>PACMAD clade</taxon>
        <taxon>Panicoideae</taxon>
        <taxon>Andropogonodae</taxon>
        <taxon>Andropogoneae</taxon>
        <taxon>Tripsacinae</taxon>
        <taxon>Zea</taxon>
    </lineage>
</organism>
<reference key="1">
    <citation type="journal article" date="2002" name="Transgenic Res.">
        <title>Expression of the high capacity calcium-binding domain of calreticulin increases bioavailable calcium stores in plants.</title>
        <authorList>
            <person name="Wyatt S.E."/>
            <person name="Tsou P.-L."/>
            <person name="Robertson D."/>
        </authorList>
    </citation>
    <scope>NUCLEOTIDE SEQUENCE [MRNA]</scope>
</reference>
<dbReference type="EMBL" id="AF190454">
    <property type="protein sequence ID" value="AAF01470.1"/>
    <property type="molecule type" value="mRNA"/>
</dbReference>
<dbReference type="SMR" id="Q9SP22"/>
<dbReference type="FunCoup" id="Q9SP22">
    <property type="interactions" value="3118"/>
</dbReference>
<dbReference type="STRING" id="4577.Q9SP22"/>
<dbReference type="GlyCosmos" id="Q9SP22">
    <property type="glycosylation" value="1 site, No reported glycans"/>
</dbReference>
<dbReference type="PaxDb" id="4577-GRMZM2G358059_P01"/>
<dbReference type="eggNOG" id="KOG0674">
    <property type="taxonomic scope" value="Eukaryota"/>
</dbReference>
<dbReference type="InParanoid" id="Q9SP22"/>
<dbReference type="Proteomes" id="UP000007305">
    <property type="component" value="Unplaced"/>
</dbReference>
<dbReference type="ExpressionAtlas" id="Q9SP22">
    <property type="expression patterns" value="baseline and differential"/>
</dbReference>
<dbReference type="GO" id="GO:0005788">
    <property type="term" value="C:endoplasmic reticulum lumen"/>
    <property type="evidence" value="ECO:0007669"/>
    <property type="project" value="UniProtKB-SubCell"/>
</dbReference>
<dbReference type="GO" id="GO:0005789">
    <property type="term" value="C:endoplasmic reticulum membrane"/>
    <property type="evidence" value="ECO:0000318"/>
    <property type="project" value="GO_Central"/>
</dbReference>
<dbReference type="GO" id="GO:0005509">
    <property type="term" value="F:calcium ion binding"/>
    <property type="evidence" value="ECO:0000318"/>
    <property type="project" value="GO_Central"/>
</dbReference>
<dbReference type="GO" id="GO:0030246">
    <property type="term" value="F:carbohydrate binding"/>
    <property type="evidence" value="ECO:0007669"/>
    <property type="project" value="UniProtKB-KW"/>
</dbReference>
<dbReference type="GO" id="GO:0051082">
    <property type="term" value="F:unfolded protein binding"/>
    <property type="evidence" value="ECO:0007669"/>
    <property type="project" value="InterPro"/>
</dbReference>
<dbReference type="GO" id="GO:0036503">
    <property type="term" value="P:ERAD pathway"/>
    <property type="evidence" value="ECO:0000318"/>
    <property type="project" value="GO_Central"/>
</dbReference>
<dbReference type="GO" id="GO:0006457">
    <property type="term" value="P:protein folding"/>
    <property type="evidence" value="ECO:0000318"/>
    <property type="project" value="GO_Central"/>
</dbReference>
<dbReference type="FunFam" id="2.10.250.10:FF:000002">
    <property type="entry name" value="Calreticulin"/>
    <property type="match status" value="1"/>
</dbReference>
<dbReference type="FunFam" id="2.60.120.200:FF:000018">
    <property type="entry name" value="Calreticulin 1b"/>
    <property type="match status" value="1"/>
</dbReference>
<dbReference type="FunFam" id="2.60.120.200:FF:000339">
    <property type="entry name" value="Calreticulin 3"/>
    <property type="match status" value="1"/>
</dbReference>
<dbReference type="Gene3D" id="2.60.120.200">
    <property type="match status" value="1"/>
</dbReference>
<dbReference type="Gene3D" id="2.10.250.10">
    <property type="entry name" value="Calreticulin/calnexin, P domain"/>
    <property type="match status" value="1"/>
</dbReference>
<dbReference type="InterPro" id="IPR001580">
    <property type="entry name" value="Calret/calnex"/>
</dbReference>
<dbReference type="InterPro" id="IPR018124">
    <property type="entry name" value="Calret/calnex_CS"/>
</dbReference>
<dbReference type="InterPro" id="IPR009169">
    <property type="entry name" value="Calreticulin"/>
</dbReference>
<dbReference type="InterPro" id="IPR009033">
    <property type="entry name" value="Calreticulin/calnexin_P_dom_sf"/>
</dbReference>
<dbReference type="InterPro" id="IPR013320">
    <property type="entry name" value="ConA-like_dom_sf"/>
</dbReference>
<dbReference type="PANTHER" id="PTHR11073:SF2">
    <property type="entry name" value="CALRETICULIN"/>
    <property type="match status" value="1"/>
</dbReference>
<dbReference type="PANTHER" id="PTHR11073">
    <property type="entry name" value="CALRETICULIN AND CALNEXIN"/>
    <property type="match status" value="1"/>
</dbReference>
<dbReference type="Pfam" id="PF00262">
    <property type="entry name" value="Calreticulin"/>
    <property type="match status" value="2"/>
</dbReference>
<dbReference type="PIRSF" id="PIRSF002356">
    <property type="entry name" value="Calreticulin"/>
    <property type="match status" value="1"/>
</dbReference>
<dbReference type="PRINTS" id="PR00626">
    <property type="entry name" value="CALRETICULIN"/>
</dbReference>
<dbReference type="SUPFAM" id="SSF49899">
    <property type="entry name" value="Concanavalin A-like lectins/glucanases"/>
    <property type="match status" value="1"/>
</dbReference>
<dbReference type="SUPFAM" id="SSF63887">
    <property type="entry name" value="P-domain of calnexin/calreticulin"/>
    <property type="match status" value="1"/>
</dbReference>
<dbReference type="PROSITE" id="PS00803">
    <property type="entry name" value="CALRETICULIN_1"/>
    <property type="match status" value="1"/>
</dbReference>
<dbReference type="PROSITE" id="PS00805">
    <property type="entry name" value="CALRETICULIN_REPEAT"/>
    <property type="match status" value="2"/>
</dbReference>
<dbReference type="PROSITE" id="PS00014">
    <property type="entry name" value="ER_TARGET"/>
    <property type="match status" value="1"/>
</dbReference>
<accession>Q9SP22</accession>
<name>CALR_MAIZE</name>